<name>CUZD1_HUMAN</name>
<evidence type="ECO:0000250" key="1">
    <source>
        <dbReference type="UniProtKB" id="P70412"/>
    </source>
</evidence>
<evidence type="ECO:0000255" key="2"/>
<evidence type="ECO:0000255" key="3">
    <source>
        <dbReference type="PROSITE-ProRule" id="PRU00059"/>
    </source>
</evidence>
<evidence type="ECO:0000255" key="4">
    <source>
        <dbReference type="PROSITE-ProRule" id="PRU00375"/>
    </source>
</evidence>
<evidence type="ECO:0000269" key="5">
    <source>
    </source>
</evidence>
<evidence type="ECO:0000303" key="6">
    <source>
    </source>
</evidence>
<evidence type="ECO:0000303" key="7">
    <source>
    </source>
</evidence>
<evidence type="ECO:0000305" key="8"/>
<evidence type="ECO:0000312" key="9">
    <source>
        <dbReference type="EMBL" id="AAP15458.1"/>
    </source>
</evidence>
<evidence type="ECO:0000312" key="10">
    <source>
        <dbReference type="EMBL" id="AAQ88920.1"/>
    </source>
</evidence>
<evidence type="ECO:0000312" key="11">
    <source>
        <dbReference type="EMBL" id="CAD98079.2"/>
    </source>
</evidence>
<evidence type="ECO:0000312" key="12">
    <source>
        <dbReference type="EMBL" id="CAH70006.1"/>
    </source>
</evidence>
<sequence>MELVRRLMPLTLLILSCLAELTMAEAEGNASCTVSLGGANMAETHKAMILQLNPSENCTWTIERPENKSIRIIFSYVQLDPDGSCESENIKVFDGTSSNGPLLGQVCSKNDYVPVFESSSSTLTFQIVTDSARIQRTVFVFYYFFSPNISIPNCGGYLDTLEGSFTSPNYPKPHPELAYCVWHIQVEKDYKIKLNFKEIFLEIDKQCKFDFLAIYDGPSTNSGLIGQVCGRVTPTFESSSNSLTVVLSTDYANSYRGFSASYTSIYAENINTTSLTCSSDRMRVIISKSYLEAFNSNGNNLQLKDPTCRPKLSNVVEFSVPLNGCGTIRKVEDQSITYTNIITFSASSTSEVITRQKQLQIIVKCEMGHNSTVEIIYITEDDVIQSQNALGKYNTSMALFESNSFEKTILESPYYVDLNQTLFVQVSLHTSDPNLVVFLDTCRASPTSDFASPTYDLIKSGCSRDETCKVYPLFGHYGRFQFNAFKFLRSMSSVYLQCKVLICDSSDHQSRCNQGCVSRSKRDISSYKWKTDSIIGPIRLKRDRSASGNSGFQHETHAEETPNQPFNSVHLFSFMVLALNVVTVATITVRHFVNQRADYKYQKLQNY</sequence>
<accession>Q86UP6</accession>
<accession>A8K080</accession>
<accession>B2RN93</accession>
<accession>D3DRE5</accession>
<accession>Q7Z660</accession>
<accession>Q7Z661</accession>
<accession>Q86SG1</accession>
<accession>Q86UP5</accession>
<accession>Q9HAR7</accession>
<protein>
    <recommendedName>
        <fullName evidence="8">CUB and zona pellucida-like domain-containing protein 1</fullName>
        <shortName>CUB and ZP domain-containing protein 1</shortName>
    </recommendedName>
    <alternativeName>
        <fullName>Transmembrane protein UO-44</fullName>
    </alternativeName>
</protein>
<reference evidence="8 9" key="1">
    <citation type="journal article" date="2004" name="Oncogene">
        <title>Molecular cloning, characterization and isolation of novel spliced variants of the human ortholog of a rat estrogen-regulated membrane-associated protein, UO-44.</title>
        <authorList>
            <person name="Leong C.T.C."/>
            <person name="Ng C.Y."/>
            <person name="Ng C.P."/>
            <person name="Ma Z.S."/>
            <person name="Nguyen T.H."/>
            <person name="Tay S.K."/>
            <person name="Huynh H."/>
        </authorList>
    </citation>
    <scope>NUCLEOTIDE SEQUENCE [MRNA] (ISOFORMS 1; 2 AND 3)</scope>
    <scope>FUNCTION</scope>
    <scope>TISSUE SPECIFICITY</scope>
</reference>
<reference evidence="8 10" key="2">
    <citation type="journal article" date="2003" name="Genome Res.">
        <title>The secreted protein discovery initiative (SPDI), a large-scale effort to identify novel human secreted and transmembrane proteins: a bioinformatics assessment.</title>
        <authorList>
            <person name="Clark H.F."/>
            <person name="Gurney A.L."/>
            <person name="Abaya E."/>
            <person name="Baker K."/>
            <person name="Baldwin D.T."/>
            <person name="Brush J."/>
            <person name="Chen J."/>
            <person name="Chow B."/>
            <person name="Chui C."/>
            <person name="Crowley C."/>
            <person name="Currell B."/>
            <person name="Deuel B."/>
            <person name="Dowd P."/>
            <person name="Eaton D."/>
            <person name="Foster J.S."/>
            <person name="Grimaldi C."/>
            <person name="Gu Q."/>
            <person name="Hass P.E."/>
            <person name="Heldens S."/>
            <person name="Huang A."/>
            <person name="Kim H.S."/>
            <person name="Klimowski L."/>
            <person name="Jin Y."/>
            <person name="Johnson S."/>
            <person name="Lee J."/>
            <person name="Lewis L."/>
            <person name="Liao D."/>
            <person name="Mark M.R."/>
            <person name="Robbie E."/>
            <person name="Sanchez C."/>
            <person name="Schoenfeld J."/>
            <person name="Seshagiri S."/>
            <person name="Simmons L."/>
            <person name="Singh J."/>
            <person name="Smith V."/>
            <person name="Stinson J."/>
            <person name="Vagts A."/>
            <person name="Vandlen R.L."/>
            <person name="Watanabe C."/>
            <person name="Wieand D."/>
            <person name="Woods K."/>
            <person name="Xie M.-H."/>
            <person name="Yansura D.G."/>
            <person name="Yi S."/>
            <person name="Yu G."/>
            <person name="Yuan J."/>
            <person name="Zhang M."/>
            <person name="Zhang Z."/>
            <person name="Goddard A.D."/>
            <person name="Wood W.I."/>
            <person name="Godowski P.J."/>
            <person name="Gray A.M."/>
        </authorList>
    </citation>
    <scope>NUCLEOTIDE SEQUENCE [LARGE SCALE MRNA] (ISOFORM 1)</scope>
</reference>
<reference key="3">
    <citation type="journal article" date="2004" name="Nat. Genet.">
        <title>Complete sequencing and characterization of 21,243 full-length human cDNAs.</title>
        <authorList>
            <person name="Ota T."/>
            <person name="Suzuki Y."/>
            <person name="Nishikawa T."/>
            <person name="Otsuki T."/>
            <person name="Sugiyama T."/>
            <person name="Irie R."/>
            <person name="Wakamatsu A."/>
            <person name="Hayashi K."/>
            <person name="Sato H."/>
            <person name="Nagai K."/>
            <person name="Kimura K."/>
            <person name="Makita H."/>
            <person name="Sekine M."/>
            <person name="Obayashi M."/>
            <person name="Nishi T."/>
            <person name="Shibahara T."/>
            <person name="Tanaka T."/>
            <person name="Ishii S."/>
            <person name="Yamamoto J."/>
            <person name="Saito K."/>
            <person name="Kawai Y."/>
            <person name="Isono Y."/>
            <person name="Nakamura Y."/>
            <person name="Nagahari K."/>
            <person name="Murakami K."/>
            <person name="Yasuda T."/>
            <person name="Iwayanagi T."/>
            <person name="Wagatsuma M."/>
            <person name="Shiratori A."/>
            <person name="Sudo H."/>
            <person name="Hosoiri T."/>
            <person name="Kaku Y."/>
            <person name="Kodaira H."/>
            <person name="Kondo H."/>
            <person name="Sugawara M."/>
            <person name="Takahashi M."/>
            <person name="Kanda K."/>
            <person name="Yokoi T."/>
            <person name="Furuya T."/>
            <person name="Kikkawa E."/>
            <person name="Omura Y."/>
            <person name="Abe K."/>
            <person name="Kamihara K."/>
            <person name="Katsuta N."/>
            <person name="Sato K."/>
            <person name="Tanikawa M."/>
            <person name="Yamazaki M."/>
            <person name="Ninomiya K."/>
            <person name="Ishibashi T."/>
            <person name="Yamashita H."/>
            <person name="Murakawa K."/>
            <person name="Fujimori K."/>
            <person name="Tanai H."/>
            <person name="Kimata M."/>
            <person name="Watanabe M."/>
            <person name="Hiraoka S."/>
            <person name="Chiba Y."/>
            <person name="Ishida S."/>
            <person name="Ono Y."/>
            <person name="Takiguchi S."/>
            <person name="Watanabe S."/>
            <person name="Yosida M."/>
            <person name="Hotuta T."/>
            <person name="Kusano J."/>
            <person name="Kanehori K."/>
            <person name="Takahashi-Fujii A."/>
            <person name="Hara H."/>
            <person name="Tanase T.-O."/>
            <person name="Nomura Y."/>
            <person name="Togiya S."/>
            <person name="Komai F."/>
            <person name="Hara R."/>
            <person name="Takeuchi K."/>
            <person name="Arita M."/>
            <person name="Imose N."/>
            <person name="Musashino K."/>
            <person name="Yuuki H."/>
            <person name="Oshima A."/>
            <person name="Sasaki N."/>
            <person name="Aotsuka S."/>
            <person name="Yoshikawa Y."/>
            <person name="Matsunawa H."/>
            <person name="Ichihara T."/>
            <person name="Shiohata N."/>
            <person name="Sano S."/>
            <person name="Moriya S."/>
            <person name="Momiyama H."/>
            <person name="Satoh N."/>
            <person name="Takami S."/>
            <person name="Terashima Y."/>
            <person name="Suzuki O."/>
            <person name="Nakagawa S."/>
            <person name="Senoh A."/>
            <person name="Mizoguchi H."/>
            <person name="Goto Y."/>
            <person name="Shimizu F."/>
            <person name="Wakebe H."/>
            <person name="Hishigaki H."/>
            <person name="Watanabe T."/>
            <person name="Sugiyama A."/>
            <person name="Takemoto M."/>
            <person name="Kawakami B."/>
            <person name="Yamazaki M."/>
            <person name="Watanabe K."/>
            <person name="Kumagai A."/>
            <person name="Itakura S."/>
            <person name="Fukuzumi Y."/>
            <person name="Fujimori Y."/>
            <person name="Komiyama M."/>
            <person name="Tashiro H."/>
            <person name="Tanigami A."/>
            <person name="Fujiwara T."/>
            <person name="Ono T."/>
            <person name="Yamada K."/>
            <person name="Fujii Y."/>
            <person name="Ozaki K."/>
            <person name="Hirao M."/>
            <person name="Ohmori Y."/>
            <person name="Kawabata A."/>
            <person name="Hikiji T."/>
            <person name="Kobatake N."/>
            <person name="Inagaki H."/>
            <person name="Ikema Y."/>
            <person name="Okamoto S."/>
            <person name="Okitani R."/>
            <person name="Kawakami T."/>
            <person name="Noguchi S."/>
            <person name="Itoh T."/>
            <person name="Shigeta K."/>
            <person name="Senba T."/>
            <person name="Matsumura K."/>
            <person name="Nakajima Y."/>
            <person name="Mizuno T."/>
            <person name="Morinaga M."/>
            <person name="Sasaki M."/>
            <person name="Togashi T."/>
            <person name="Oyama M."/>
            <person name="Hata H."/>
            <person name="Watanabe M."/>
            <person name="Komatsu T."/>
            <person name="Mizushima-Sugano J."/>
            <person name="Satoh T."/>
            <person name="Shirai Y."/>
            <person name="Takahashi Y."/>
            <person name="Nakagawa K."/>
            <person name="Okumura K."/>
            <person name="Nagase T."/>
            <person name="Nomura N."/>
            <person name="Kikuchi H."/>
            <person name="Masuho Y."/>
            <person name="Yamashita R."/>
            <person name="Nakai K."/>
            <person name="Yada T."/>
            <person name="Nakamura Y."/>
            <person name="Ohara O."/>
            <person name="Isogai T."/>
            <person name="Sugano S."/>
        </authorList>
    </citation>
    <scope>NUCLEOTIDE SEQUENCE [LARGE SCALE MRNA] (ISOFORM 2)</scope>
    <source>
        <tissue>Urinary bladder</tissue>
    </source>
</reference>
<reference evidence="12" key="4">
    <citation type="journal article" date="2004" name="Nature">
        <title>The DNA sequence and comparative analysis of human chromosome 10.</title>
        <authorList>
            <person name="Deloukas P."/>
            <person name="Earthrowl M.E."/>
            <person name="Grafham D.V."/>
            <person name="Rubenfield M."/>
            <person name="French L."/>
            <person name="Steward C.A."/>
            <person name="Sims S.K."/>
            <person name="Jones M.C."/>
            <person name="Searle S."/>
            <person name="Scott C."/>
            <person name="Howe K."/>
            <person name="Hunt S.E."/>
            <person name="Andrews T.D."/>
            <person name="Gilbert J.G.R."/>
            <person name="Swarbreck D."/>
            <person name="Ashurst J.L."/>
            <person name="Taylor A."/>
            <person name="Battles J."/>
            <person name="Bird C.P."/>
            <person name="Ainscough R."/>
            <person name="Almeida J.P."/>
            <person name="Ashwell R.I.S."/>
            <person name="Ambrose K.D."/>
            <person name="Babbage A.K."/>
            <person name="Bagguley C.L."/>
            <person name="Bailey J."/>
            <person name="Banerjee R."/>
            <person name="Bates K."/>
            <person name="Beasley H."/>
            <person name="Bray-Allen S."/>
            <person name="Brown A.J."/>
            <person name="Brown J.Y."/>
            <person name="Burford D.C."/>
            <person name="Burrill W."/>
            <person name="Burton J."/>
            <person name="Cahill P."/>
            <person name="Camire D."/>
            <person name="Carter N.P."/>
            <person name="Chapman J.C."/>
            <person name="Clark S.Y."/>
            <person name="Clarke G."/>
            <person name="Clee C.M."/>
            <person name="Clegg S."/>
            <person name="Corby N."/>
            <person name="Coulson A."/>
            <person name="Dhami P."/>
            <person name="Dutta I."/>
            <person name="Dunn M."/>
            <person name="Faulkner L."/>
            <person name="Frankish A."/>
            <person name="Frankland J.A."/>
            <person name="Garner P."/>
            <person name="Garnett J."/>
            <person name="Gribble S."/>
            <person name="Griffiths C."/>
            <person name="Grocock R."/>
            <person name="Gustafson E."/>
            <person name="Hammond S."/>
            <person name="Harley J.L."/>
            <person name="Hart E."/>
            <person name="Heath P.D."/>
            <person name="Ho T.P."/>
            <person name="Hopkins B."/>
            <person name="Horne J."/>
            <person name="Howden P.J."/>
            <person name="Huckle E."/>
            <person name="Hynds C."/>
            <person name="Johnson C."/>
            <person name="Johnson D."/>
            <person name="Kana A."/>
            <person name="Kay M."/>
            <person name="Kimberley A.M."/>
            <person name="Kershaw J.K."/>
            <person name="Kokkinaki M."/>
            <person name="Laird G.K."/>
            <person name="Lawlor S."/>
            <person name="Lee H.M."/>
            <person name="Leongamornlert D.A."/>
            <person name="Laird G."/>
            <person name="Lloyd C."/>
            <person name="Lloyd D.M."/>
            <person name="Loveland J."/>
            <person name="Lovell J."/>
            <person name="McLaren S."/>
            <person name="McLay K.E."/>
            <person name="McMurray A."/>
            <person name="Mashreghi-Mohammadi M."/>
            <person name="Matthews L."/>
            <person name="Milne S."/>
            <person name="Nickerson T."/>
            <person name="Nguyen M."/>
            <person name="Overton-Larty E."/>
            <person name="Palmer S.A."/>
            <person name="Pearce A.V."/>
            <person name="Peck A.I."/>
            <person name="Pelan S."/>
            <person name="Phillimore B."/>
            <person name="Porter K."/>
            <person name="Rice C.M."/>
            <person name="Rogosin A."/>
            <person name="Ross M.T."/>
            <person name="Sarafidou T."/>
            <person name="Sehra H.K."/>
            <person name="Shownkeen R."/>
            <person name="Skuce C.D."/>
            <person name="Smith M."/>
            <person name="Standring L."/>
            <person name="Sycamore N."/>
            <person name="Tester J."/>
            <person name="Thorpe A."/>
            <person name="Torcasso W."/>
            <person name="Tracey A."/>
            <person name="Tromans A."/>
            <person name="Tsolas J."/>
            <person name="Wall M."/>
            <person name="Walsh J."/>
            <person name="Wang H."/>
            <person name="Weinstock K."/>
            <person name="West A.P."/>
            <person name="Willey D.L."/>
            <person name="Whitehead S.L."/>
            <person name="Wilming L."/>
            <person name="Wray P.W."/>
            <person name="Young L."/>
            <person name="Chen Y."/>
            <person name="Lovering R.C."/>
            <person name="Moschonas N.K."/>
            <person name="Siebert R."/>
            <person name="Fechtel K."/>
            <person name="Bentley D."/>
            <person name="Durbin R.M."/>
            <person name="Hubbard T."/>
            <person name="Doucette-Stamm L."/>
            <person name="Beck S."/>
            <person name="Smith D.R."/>
            <person name="Rogers J."/>
        </authorList>
    </citation>
    <scope>NUCLEOTIDE SEQUENCE [LARGE SCALE GENOMIC DNA]</scope>
</reference>
<reference evidence="8 11" key="5">
    <citation type="submission" date="2005-09" db="EMBL/GenBank/DDBJ databases">
        <authorList>
            <person name="Mural R.J."/>
            <person name="Istrail S."/>
            <person name="Sutton G.G."/>
            <person name="Florea L."/>
            <person name="Halpern A.L."/>
            <person name="Mobarry C.M."/>
            <person name="Lippert R."/>
            <person name="Walenz B."/>
            <person name="Shatkay H."/>
            <person name="Dew I."/>
            <person name="Miller J.R."/>
            <person name="Flanigan M.J."/>
            <person name="Edwards N.J."/>
            <person name="Bolanos R."/>
            <person name="Fasulo D."/>
            <person name="Halldorsson B.V."/>
            <person name="Hannenhalli S."/>
            <person name="Turner R."/>
            <person name="Yooseph S."/>
            <person name="Lu F."/>
            <person name="Nusskern D.R."/>
            <person name="Shue B.C."/>
            <person name="Zheng X.H."/>
            <person name="Zhong F."/>
            <person name="Delcher A.L."/>
            <person name="Huson D.H."/>
            <person name="Kravitz S.A."/>
            <person name="Mouchard L."/>
            <person name="Reinert K."/>
            <person name="Remington K.A."/>
            <person name="Clark A.G."/>
            <person name="Waterman M.S."/>
            <person name="Eichler E.E."/>
            <person name="Adams M.D."/>
            <person name="Hunkapiller M.W."/>
            <person name="Myers E.W."/>
            <person name="Venter J.C."/>
        </authorList>
    </citation>
    <scope>NUCLEOTIDE SEQUENCE [LARGE SCALE GENOMIC DNA]</scope>
</reference>
<reference key="6">
    <citation type="journal article" date="2004" name="Genome Res.">
        <title>The status, quality, and expansion of the NIH full-length cDNA project: the Mammalian Gene Collection (MGC).</title>
        <authorList>
            <consortium name="The MGC Project Team"/>
        </authorList>
    </citation>
    <scope>NUCLEOTIDE SEQUENCE [LARGE SCALE MRNA] (ISOFORM 1)</scope>
    <source>
        <tissue>Brain</tissue>
    </source>
</reference>
<reference key="7">
    <citation type="journal article" date="2007" name="BMC Genomics">
        <title>The full-ORF clone resource of the German cDNA consortium.</title>
        <authorList>
            <person name="Bechtel S."/>
            <person name="Rosenfelder H."/>
            <person name="Duda A."/>
            <person name="Schmidt C.P."/>
            <person name="Ernst U."/>
            <person name="Wellenreuther R."/>
            <person name="Mehrle A."/>
            <person name="Schuster C."/>
            <person name="Bahr A."/>
            <person name="Bloecker H."/>
            <person name="Heubner D."/>
            <person name="Hoerlein A."/>
            <person name="Michel G."/>
            <person name="Wedler H."/>
            <person name="Koehrer K."/>
            <person name="Ottenwaelder B."/>
            <person name="Poustka A."/>
            <person name="Wiemann S."/>
            <person name="Schupp I."/>
        </authorList>
    </citation>
    <scope>NUCLEOTIDE SEQUENCE [LARGE SCALE MRNA] OF 151-607 (ISOFORM 1)</scope>
</reference>
<organism>
    <name type="scientific">Homo sapiens</name>
    <name type="common">Human</name>
    <dbReference type="NCBI Taxonomy" id="9606"/>
    <lineage>
        <taxon>Eukaryota</taxon>
        <taxon>Metazoa</taxon>
        <taxon>Chordata</taxon>
        <taxon>Craniata</taxon>
        <taxon>Vertebrata</taxon>
        <taxon>Euteleostomi</taxon>
        <taxon>Mammalia</taxon>
        <taxon>Eutheria</taxon>
        <taxon>Euarchontoglires</taxon>
        <taxon>Primates</taxon>
        <taxon>Haplorrhini</taxon>
        <taxon>Catarrhini</taxon>
        <taxon>Hominidae</taxon>
        <taxon>Homo</taxon>
    </lineage>
</organism>
<dbReference type="EMBL" id="AY260047">
    <property type="protein sequence ID" value="AAP15458.1"/>
    <property type="molecule type" value="mRNA"/>
</dbReference>
<dbReference type="EMBL" id="AY260048">
    <property type="protein sequence ID" value="AAP15459.1"/>
    <property type="molecule type" value="mRNA"/>
</dbReference>
<dbReference type="EMBL" id="AY260049">
    <property type="protein sequence ID" value="AAP15460.1"/>
    <property type="molecule type" value="mRNA"/>
</dbReference>
<dbReference type="EMBL" id="AY260050">
    <property type="protein sequence ID" value="AAP15461.1"/>
    <property type="molecule type" value="mRNA"/>
</dbReference>
<dbReference type="EMBL" id="AF305835">
    <property type="protein sequence ID" value="AAG23215.1"/>
    <property type="status" value="ALT_FRAME"/>
    <property type="molecule type" value="mRNA"/>
</dbReference>
<dbReference type="EMBL" id="AY358556">
    <property type="protein sequence ID" value="AAQ88920.1"/>
    <property type="molecule type" value="mRNA"/>
</dbReference>
<dbReference type="EMBL" id="AK289445">
    <property type="protein sequence ID" value="BAF82134.1"/>
    <property type="molecule type" value="mRNA"/>
</dbReference>
<dbReference type="EMBL" id="AL359747">
    <property type="protein sequence ID" value="CAH70003.1"/>
    <property type="molecule type" value="Genomic_DNA"/>
</dbReference>
<dbReference type="EMBL" id="AL359747">
    <property type="protein sequence ID" value="CAH70004.1"/>
    <property type="molecule type" value="Genomic_DNA"/>
</dbReference>
<dbReference type="EMBL" id="AL359747">
    <property type="protein sequence ID" value="CAH70006.1"/>
    <property type="molecule type" value="Genomic_DNA"/>
</dbReference>
<dbReference type="EMBL" id="AC073585">
    <property type="protein sequence ID" value="CAH70006.1"/>
    <property type="status" value="JOINED"/>
    <property type="molecule type" value="Genomic_DNA"/>
</dbReference>
<dbReference type="EMBL" id="CH471066">
    <property type="protein sequence ID" value="EAW49302.1"/>
    <property type="molecule type" value="Genomic_DNA"/>
</dbReference>
<dbReference type="EMBL" id="CH471066">
    <property type="protein sequence ID" value="EAW49303.1"/>
    <property type="molecule type" value="Genomic_DNA"/>
</dbReference>
<dbReference type="EMBL" id="CH471066">
    <property type="protein sequence ID" value="EAW49304.1"/>
    <property type="molecule type" value="Genomic_DNA"/>
</dbReference>
<dbReference type="EMBL" id="CH471066">
    <property type="protein sequence ID" value="EAW49305.1"/>
    <property type="molecule type" value="Genomic_DNA"/>
</dbReference>
<dbReference type="EMBL" id="BC136755">
    <property type="protein sequence ID" value="AAI36756.1"/>
    <property type="molecule type" value="mRNA"/>
</dbReference>
<dbReference type="EMBL" id="BX538283">
    <property type="protein sequence ID" value="CAD98079.2"/>
    <property type="molecule type" value="mRNA"/>
</dbReference>
<dbReference type="EMBL" id="BX538284">
    <property type="protein sequence ID" value="CAD98080.2"/>
    <property type="molecule type" value="mRNA"/>
</dbReference>
<dbReference type="CCDS" id="CCDS7631.1">
    <molecule id="Q86UP6-1"/>
</dbReference>
<dbReference type="RefSeq" id="NP_071317.2">
    <molecule id="Q86UP6-1"/>
    <property type="nucleotide sequence ID" value="NM_022034.5"/>
</dbReference>
<dbReference type="SMR" id="Q86UP6"/>
<dbReference type="BioGRID" id="119100">
    <property type="interactions" value="2"/>
</dbReference>
<dbReference type="FunCoup" id="Q86UP6">
    <property type="interactions" value="8"/>
</dbReference>
<dbReference type="IntAct" id="Q86UP6">
    <property type="interactions" value="1"/>
</dbReference>
<dbReference type="STRING" id="9606.ENSP00000376540"/>
<dbReference type="GlyCosmos" id="Q86UP6">
    <property type="glycosylation" value="5 sites, No reported glycans"/>
</dbReference>
<dbReference type="GlyGen" id="Q86UP6">
    <property type="glycosylation" value="5 sites"/>
</dbReference>
<dbReference type="iPTMnet" id="Q86UP6"/>
<dbReference type="PhosphoSitePlus" id="Q86UP6"/>
<dbReference type="BioMuta" id="CUZD1"/>
<dbReference type="DMDM" id="74750426"/>
<dbReference type="MassIVE" id="Q86UP6"/>
<dbReference type="PaxDb" id="9606-ENSP00000357900"/>
<dbReference type="PeptideAtlas" id="Q86UP6"/>
<dbReference type="ProteomicsDB" id="69848">
    <molecule id="Q86UP6-1"/>
</dbReference>
<dbReference type="ProteomicsDB" id="69849">
    <molecule id="Q86UP6-2"/>
</dbReference>
<dbReference type="ProteomicsDB" id="69850">
    <molecule id="Q86UP6-3"/>
</dbReference>
<dbReference type="Antibodypedia" id="62632">
    <property type="antibodies" value="148 antibodies from 15 providers"/>
</dbReference>
<dbReference type="DNASU" id="50624"/>
<dbReference type="Ensembl" id="ENST00000392790.6">
    <molecule id="Q86UP6-1"/>
    <property type="protein sequence ID" value="ENSP00000376540.1"/>
    <property type="gene ID" value="ENSG00000138161.14"/>
</dbReference>
<dbReference type="GeneID" id="50624"/>
<dbReference type="KEGG" id="hsa:50624"/>
<dbReference type="MANE-Select" id="ENST00000392790.6">
    <property type="protein sequence ID" value="ENSP00000376540.1"/>
    <property type="RefSeq nucleotide sequence ID" value="NM_022034.6"/>
    <property type="RefSeq protein sequence ID" value="NP_071317.2"/>
</dbReference>
<dbReference type="UCSC" id="uc001lgs.4">
    <molecule id="Q86UP6-1"/>
    <property type="organism name" value="human"/>
</dbReference>
<dbReference type="AGR" id="HGNC:17937"/>
<dbReference type="CTD" id="50624"/>
<dbReference type="DisGeNET" id="50624"/>
<dbReference type="GeneCards" id="CUZD1"/>
<dbReference type="HGNC" id="HGNC:17937">
    <property type="gene designation" value="CUZD1"/>
</dbReference>
<dbReference type="HPA" id="ENSG00000138161">
    <property type="expression patterns" value="Tissue enriched (pancreas)"/>
</dbReference>
<dbReference type="MIM" id="616644">
    <property type="type" value="gene"/>
</dbReference>
<dbReference type="neXtProt" id="NX_Q86UP6"/>
<dbReference type="OpenTargets" id="ENSG00000138161"/>
<dbReference type="PharmGKB" id="PA134903546"/>
<dbReference type="VEuPathDB" id="HostDB:ENSG00000138161"/>
<dbReference type="eggNOG" id="ENOG502RSDM">
    <property type="taxonomic scope" value="Eukaryota"/>
</dbReference>
<dbReference type="GeneTree" id="ENSGT00940000154525"/>
<dbReference type="HOGENOM" id="CLU_024908_1_0_1"/>
<dbReference type="InParanoid" id="Q86UP6"/>
<dbReference type="OMA" id="CEMEYNS"/>
<dbReference type="OrthoDB" id="10063988at2759"/>
<dbReference type="PAN-GO" id="Q86UP6">
    <property type="GO annotations" value="0 GO annotations based on evolutionary models"/>
</dbReference>
<dbReference type="PhylomeDB" id="Q86UP6"/>
<dbReference type="TreeFam" id="TF351216"/>
<dbReference type="PathwayCommons" id="Q86UP6"/>
<dbReference type="SignaLink" id="Q86UP6"/>
<dbReference type="BioGRID-ORCS" id="50624">
    <property type="hits" value="10 hits in 1148 CRISPR screens"/>
</dbReference>
<dbReference type="GeneWiki" id="CUZD1"/>
<dbReference type="GenomeRNAi" id="50624"/>
<dbReference type="Pharos" id="Q86UP6">
    <property type="development level" value="Tbio"/>
</dbReference>
<dbReference type="PRO" id="PR:Q86UP6"/>
<dbReference type="Proteomes" id="UP000005640">
    <property type="component" value="Chromosome 10"/>
</dbReference>
<dbReference type="RNAct" id="Q86UP6">
    <property type="molecule type" value="protein"/>
</dbReference>
<dbReference type="Bgee" id="ENSG00000138161">
    <property type="expression patterns" value="Expressed in body of pancreas and 97 other cell types or tissues"/>
</dbReference>
<dbReference type="ExpressionAtlas" id="Q86UP6">
    <property type="expression patterns" value="baseline and differential"/>
</dbReference>
<dbReference type="GO" id="GO:0009986">
    <property type="term" value="C:cell surface"/>
    <property type="evidence" value="ECO:0000318"/>
    <property type="project" value="GO_Central"/>
</dbReference>
<dbReference type="GO" id="GO:0005615">
    <property type="term" value="C:extracellular space"/>
    <property type="evidence" value="ECO:0000318"/>
    <property type="project" value="GO_Central"/>
</dbReference>
<dbReference type="GO" id="GO:0016020">
    <property type="term" value="C:membrane"/>
    <property type="evidence" value="ECO:0000314"/>
    <property type="project" value="UniProtKB"/>
</dbReference>
<dbReference type="GO" id="GO:0042589">
    <property type="term" value="C:zymogen granule membrane"/>
    <property type="evidence" value="ECO:0000250"/>
    <property type="project" value="UniProtKB"/>
</dbReference>
<dbReference type="GO" id="GO:0007155">
    <property type="term" value="P:cell adhesion"/>
    <property type="evidence" value="ECO:0007669"/>
    <property type="project" value="UniProtKB-KW"/>
</dbReference>
<dbReference type="GO" id="GO:0051301">
    <property type="term" value="P:cell division"/>
    <property type="evidence" value="ECO:0007669"/>
    <property type="project" value="UniProtKB-KW"/>
</dbReference>
<dbReference type="GO" id="GO:0032023">
    <property type="term" value="P:trypsinogen activation"/>
    <property type="evidence" value="ECO:0000250"/>
    <property type="project" value="UniProtKB"/>
</dbReference>
<dbReference type="CDD" id="cd00041">
    <property type="entry name" value="CUB"/>
    <property type="match status" value="2"/>
</dbReference>
<dbReference type="FunFam" id="2.60.120.290:FF:000078">
    <property type="entry name" value="CUB and zona pellucida-like domain-containing protein 1"/>
    <property type="match status" value="1"/>
</dbReference>
<dbReference type="FunFam" id="2.60.40.3210:FF:000009">
    <property type="entry name" value="CUB and zona pellucida-like domain-containing protein 1"/>
    <property type="match status" value="1"/>
</dbReference>
<dbReference type="FunFam" id="2.60.40.4100:FF:000005">
    <property type="entry name" value="Deleted in malignant brain tumors 1"/>
    <property type="match status" value="1"/>
</dbReference>
<dbReference type="FunFam" id="2.60.120.290:FF:000004">
    <property type="entry name" value="Metalloendopeptidase"/>
    <property type="match status" value="1"/>
</dbReference>
<dbReference type="Gene3D" id="2.60.120.290">
    <property type="entry name" value="Spermadhesin, CUB domain"/>
    <property type="match status" value="2"/>
</dbReference>
<dbReference type="Gene3D" id="2.60.40.4100">
    <property type="entry name" value="Zona pellucida, ZP-C domain"/>
    <property type="match status" value="1"/>
</dbReference>
<dbReference type="Gene3D" id="2.60.40.3210">
    <property type="entry name" value="Zona pellucida, ZP-N domain"/>
    <property type="match status" value="1"/>
</dbReference>
<dbReference type="InterPro" id="IPR000859">
    <property type="entry name" value="CUB_dom"/>
</dbReference>
<dbReference type="InterPro" id="IPR035914">
    <property type="entry name" value="Sperma_CUB_dom_sf"/>
</dbReference>
<dbReference type="InterPro" id="IPR055355">
    <property type="entry name" value="ZP-C"/>
</dbReference>
<dbReference type="InterPro" id="IPR042235">
    <property type="entry name" value="ZP-C_dom"/>
</dbReference>
<dbReference type="InterPro" id="IPR055356">
    <property type="entry name" value="ZP-N"/>
</dbReference>
<dbReference type="InterPro" id="IPR048290">
    <property type="entry name" value="ZP_chr"/>
</dbReference>
<dbReference type="InterPro" id="IPR001507">
    <property type="entry name" value="ZP_dom"/>
</dbReference>
<dbReference type="PANTHER" id="PTHR14002:SF27">
    <property type="entry name" value="CUB AND ZONA PELLUCIDA-LIKE DOMAIN-CONTAINING PROTEIN 1"/>
    <property type="match status" value="1"/>
</dbReference>
<dbReference type="PANTHER" id="PTHR14002">
    <property type="entry name" value="ENDOGLIN/TGF-BETA RECEPTOR TYPE III"/>
    <property type="match status" value="1"/>
</dbReference>
<dbReference type="Pfam" id="PF00431">
    <property type="entry name" value="CUB"/>
    <property type="match status" value="2"/>
</dbReference>
<dbReference type="Pfam" id="PF00100">
    <property type="entry name" value="Zona_pellucida"/>
    <property type="match status" value="1"/>
</dbReference>
<dbReference type="Pfam" id="PF23344">
    <property type="entry name" value="ZP-N"/>
    <property type="match status" value="1"/>
</dbReference>
<dbReference type="PRINTS" id="PR00023">
    <property type="entry name" value="ZPELLUCIDA"/>
</dbReference>
<dbReference type="SMART" id="SM00042">
    <property type="entry name" value="CUB"/>
    <property type="match status" value="2"/>
</dbReference>
<dbReference type="SMART" id="SM00241">
    <property type="entry name" value="ZP"/>
    <property type="match status" value="1"/>
</dbReference>
<dbReference type="SUPFAM" id="SSF49854">
    <property type="entry name" value="Spermadhesin, CUB domain"/>
    <property type="match status" value="2"/>
</dbReference>
<dbReference type="PROSITE" id="PS01180">
    <property type="entry name" value="CUB"/>
    <property type="match status" value="2"/>
</dbReference>
<dbReference type="PROSITE" id="PS51034">
    <property type="entry name" value="ZP_2"/>
    <property type="match status" value="1"/>
</dbReference>
<comment type="function">
    <text evidence="1 5">Localized to zymogen granules, where it functions in trypsinogen activation (By similarity). May indirectly regulate cell motility, cell-cell and cell/extracellular matrix interactions (PubMed:15184879).</text>
</comment>
<comment type="subcellular location">
    <subcellularLocation>
        <location evidence="1">Zymogen granule membrane</location>
        <topology evidence="1">Single-pass type I membrane protein</topology>
    </subcellularLocation>
</comment>
<comment type="alternative products">
    <event type="alternative splicing"/>
    <isoform>
        <id>Q86UP6-1</id>
        <name evidence="5">1</name>
        <name evidence="5">UO-44D</name>
        <sequence type="displayed"/>
    </isoform>
    <isoform>
        <id>Q86UP6-2</id>
        <name evidence="5">2</name>
        <name evidence="5">UO-44B</name>
        <name evidence="5">UO-44C</name>
        <sequence type="described" ref="VSP_052019"/>
    </isoform>
    <isoform>
        <id>Q86UP6-3</id>
        <name evidence="5">3</name>
        <name evidence="5">UO-44A</name>
        <sequence type="described" ref="VSP_052018"/>
    </isoform>
</comment>
<comment type="tissue specificity">
    <text evidence="5">Detected in pancreas and epithelium of ovary. Expressed at higher levels in ovarian tumors than in normal tissue.</text>
</comment>
<comment type="sequence caution" evidence="8">
    <conflict type="frameshift">
        <sequence resource="EMBL-CDS" id="AAG23215"/>
    </conflict>
</comment>
<gene>
    <name evidence="12" type="primary">CUZD1</name>
    <name type="ORF">UNQ224/PRO257</name>
</gene>
<feature type="signal peptide" evidence="2">
    <location>
        <begin position="1"/>
        <end position="24"/>
    </location>
</feature>
<feature type="chain" id="PRO_0000233331" description="CUB and zona pellucida-like domain-containing protein 1" evidence="2">
    <location>
        <begin position="25"/>
        <end position="607"/>
    </location>
</feature>
<feature type="topological domain" description="Lumenal" evidence="1">
    <location>
        <begin position="25"/>
        <end position="568"/>
    </location>
</feature>
<feature type="transmembrane region" description="Helical" evidence="2">
    <location>
        <begin position="569"/>
        <end position="589"/>
    </location>
</feature>
<feature type="topological domain" description="Cytoplasmic" evidence="1">
    <location>
        <begin position="590"/>
        <end position="607"/>
    </location>
</feature>
<feature type="domain" description="CUB 1" evidence="3">
    <location>
        <begin position="25"/>
        <end position="146"/>
    </location>
</feature>
<feature type="domain" description="CUB 2" evidence="3">
    <location>
        <begin position="154"/>
        <end position="265"/>
    </location>
</feature>
<feature type="domain" description="ZP" evidence="4">
    <location>
        <begin position="276"/>
        <end position="519"/>
    </location>
</feature>
<feature type="glycosylation site" description="N-linked (GlcNAc...) asparagine" evidence="2">
    <location>
        <position position="29"/>
    </location>
</feature>
<feature type="glycosylation site" description="N-linked (GlcNAc...) asparagine" evidence="2">
    <location>
        <position position="57"/>
    </location>
</feature>
<feature type="glycosylation site" description="N-linked (GlcNAc...) asparagine" evidence="2">
    <location>
        <position position="67"/>
    </location>
</feature>
<feature type="glycosylation site" description="N-linked (GlcNAc...) asparagine" evidence="2">
    <location>
        <position position="394"/>
    </location>
</feature>
<feature type="glycosylation site" description="N-linked (GlcNAc...) asparagine" evidence="2">
    <location>
        <position position="419"/>
    </location>
</feature>
<feature type="disulfide bond" evidence="3">
    <location>
        <begin position="17"/>
        <end position="58"/>
    </location>
</feature>
<feature type="disulfide bond" evidence="3">
    <location>
        <begin position="85"/>
        <end position="107"/>
    </location>
</feature>
<feature type="disulfide bond" evidence="3">
    <location>
        <begin position="154"/>
        <end position="180"/>
    </location>
</feature>
<feature type="disulfide bond" evidence="3">
    <location>
        <begin position="207"/>
        <end position="229"/>
    </location>
</feature>
<feature type="disulfide bond" evidence="3">
    <location>
        <begin position="442"/>
        <end position="498"/>
    </location>
</feature>
<feature type="splice variant" id="VSP_052018" description="In isoform 3." evidence="7">
    <location>
        <begin position="1"/>
        <end position="366"/>
    </location>
</feature>
<feature type="splice variant" id="VSP_052019" description="In isoform 2." evidence="6 7">
    <location>
        <begin position="1"/>
        <end position="281"/>
    </location>
</feature>
<feature type="sequence variant" id="VAR_061992" description="In dbSNP:rs35120257.">
    <original>G</original>
    <variation>S</variation>
    <location>
        <position position="156"/>
    </location>
</feature>
<feature type="sequence conflict" description="In Ref. 7; CAD98079." evidence="8" ref="7">
    <original>T</original>
    <variation>P</variation>
    <location>
        <position position="235"/>
    </location>
</feature>
<feature type="sequence conflict" description="In Ref. 7; CAD98079." evidence="8" ref="7">
    <original>V</original>
    <variation>A</variation>
    <location>
        <position position="331"/>
    </location>
</feature>
<feature type="sequence conflict" description="In Ref. 1; AAG23215." evidence="8" ref="1">
    <original>VY</original>
    <variation>AC</variation>
    <location>
        <begin position="494"/>
        <end position="495"/>
    </location>
</feature>
<feature type="sequence conflict" description="In Ref. 7; CAD98080." evidence="8" ref="7">
    <original>E</original>
    <variation>G</variation>
    <location>
        <position position="560"/>
    </location>
</feature>
<feature type="sequence conflict" description="In Ref. 7; CAD98080." evidence="8" ref="7">
    <original>T</original>
    <variation>I</variation>
    <location>
        <position position="583"/>
    </location>
</feature>
<proteinExistence type="evidence at protein level"/>
<keyword id="KW-0025">Alternative splicing</keyword>
<keyword id="KW-0130">Cell adhesion</keyword>
<keyword id="KW-0131">Cell cycle</keyword>
<keyword id="KW-0132">Cell division</keyword>
<keyword id="KW-0968">Cytoplasmic vesicle</keyword>
<keyword id="KW-1015">Disulfide bond</keyword>
<keyword id="KW-0325">Glycoprotein</keyword>
<keyword id="KW-0472">Membrane</keyword>
<keyword id="KW-1267">Proteomics identification</keyword>
<keyword id="KW-1185">Reference proteome</keyword>
<keyword id="KW-0677">Repeat</keyword>
<keyword id="KW-0732">Signal</keyword>
<keyword id="KW-0812">Transmembrane</keyword>
<keyword id="KW-1133">Transmembrane helix</keyword>